<comment type="function">
    <text evidence="1">Produces ATP from ADP in the presence of a proton gradient across the membrane. The alpha chain is a regulatory subunit.</text>
</comment>
<comment type="catalytic activity">
    <reaction evidence="1">
        <text>ATP + H2O + 4 H(+)(in) = ADP + phosphate + 5 H(+)(out)</text>
        <dbReference type="Rhea" id="RHEA:57720"/>
        <dbReference type="ChEBI" id="CHEBI:15377"/>
        <dbReference type="ChEBI" id="CHEBI:15378"/>
        <dbReference type="ChEBI" id="CHEBI:30616"/>
        <dbReference type="ChEBI" id="CHEBI:43474"/>
        <dbReference type="ChEBI" id="CHEBI:456216"/>
        <dbReference type="EC" id="7.1.2.2"/>
    </reaction>
</comment>
<comment type="subunit">
    <text evidence="1">F-type ATPases have 2 components, CF(1) - the catalytic core - and CF(0) - the membrane proton channel. CF(1) has five subunits: alpha(3), beta(3), gamma(1), delta(1), epsilon(1). CF(0) has three main subunits: a(1), b(2) and c(9-12). The alpha and beta chains form an alternating ring which encloses part of the gamma chain. CF(1) is attached to CF(0) by a central stalk formed by the gamma and epsilon chains, while a peripheral stalk is formed by the delta and b chains.</text>
</comment>
<comment type="subcellular location">
    <subcellularLocation>
        <location evidence="1">Cell inner membrane</location>
        <topology evidence="1">Peripheral membrane protein</topology>
    </subcellularLocation>
</comment>
<comment type="similarity">
    <text evidence="1">Belongs to the ATPase alpha/beta chains family.</text>
</comment>
<evidence type="ECO:0000255" key="1">
    <source>
        <dbReference type="HAMAP-Rule" id="MF_01346"/>
    </source>
</evidence>
<protein>
    <recommendedName>
        <fullName evidence="1">ATP synthase subunit alpha</fullName>
        <ecNumber evidence="1">7.1.2.2</ecNumber>
    </recommendedName>
    <alternativeName>
        <fullName evidence="1">ATP synthase F1 sector subunit alpha</fullName>
    </alternativeName>
    <alternativeName>
        <fullName evidence="1">F-ATPase subunit alpha</fullName>
    </alternativeName>
</protein>
<dbReference type="EC" id="7.1.2.2" evidence="1"/>
<dbReference type="EMBL" id="AM236080">
    <property type="protein sequence ID" value="CAK09895.1"/>
    <property type="molecule type" value="Genomic_DNA"/>
</dbReference>
<dbReference type="RefSeq" id="WP_003543468.1">
    <property type="nucleotide sequence ID" value="NC_008380.1"/>
</dbReference>
<dbReference type="SMR" id="Q1MAZ0"/>
<dbReference type="EnsemblBacteria" id="CAK09895">
    <property type="protein sequence ID" value="CAK09895"/>
    <property type="gene ID" value="RL4409"/>
</dbReference>
<dbReference type="KEGG" id="rle:RL4409"/>
<dbReference type="eggNOG" id="COG0056">
    <property type="taxonomic scope" value="Bacteria"/>
</dbReference>
<dbReference type="HOGENOM" id="CLU_010091_2_1_5"/>
<dbReference type="Proteomes" id="UP000006575">
    <property type="component" value="Chromosome"/>
</dbReference>
<dbReference type="GO" id="GO:0005886">
    <property type="term" value="C:plasma membrane"/>
    <property type="evidence" value="ECO:0007669"/>
    <property type="project" value="UniProtKB-SubCell"/>
</dbReference>
<dbReference type="GO" id="GO:0045259">
    <property type="term" value="C:proton-transporting ATP synthase complex"/>
    <property type="evidence" value="ECO:0007669"/>
    <property type="project" value="UniProtKB-KW"/>
</dbReference>
<dbReference type="GO" id="GO:0043531">
    <property type="term" value="F:ADP binding"/>
    <property type="evidence" value="ECO:0007669"/>
    <property type="project" value="TreeGrafter"/>
</dbReference>
<dbReference type="GO" id="GO:0005524">
    <property type="term" value="F:ATP binding"/>
    <property type="evidence" value="ECO:0007669"/>
    <property type="project" value="UniProtKB-UniRule"/>
</dbReference>
<dbReference type="GO" id="GO:0046933">
    <property type="term" value="F:proton-transporting ATP synthase activity, rotational mechanism"/>
    <property type="evidence" value="ECO:0007669"/>
    <property type="project" value="UniProtKB-UniRule"/>
</dbReference>
<dbReference type="CDD" id="cd18113">
    <property type="entry name" value="ATP-synt_F1_alpha_C"/>
    <property type="match status" value="1"/>
</dbReference>
<dbReference type="CDD" id="cd18116">
    <property type="entry name" value="ATP-synt_F1_alpha_N"/>
    <property type="match status" value="1"/>
</dbReference>
<dbReference type="CDD" id="cd01132">
    <property type="entry name" value="F1-ATPase_alpha_CD"/>
    <property type="match status" value="1"/>
</dbReference>
<dbReference type="FunFam" id="1.20.150.20:FF:000001">
    <property type="entry name" value="ATP synthase subunit alpha"/>
    <property type="match status" value="1"/>
</dbReference>
<dbReference type="FunFam" id="2.40.30.20:FF:000001">
    <property type="entry name" value="ATP synthase subunit alpha"/>
    <property type="match status" value="1"/>
</dbReference>
<dbReference type="FunFam" id="3.40.50.300:FF:002432">
    <property type="entry name" value="ATP synthase subunit alpha, mitochondrial"/>
    <property type="match status" value="1"/>
</dbReference>
<dbReference type="Gene3D" id="2.40.30.20">
    <property type="match status" value="1"/>
</dbReference>
<dbReference type="Gene3D" id="1.20.150.20">
    <property type="entry name" value="ATP synthase alpha/beta chain, C-terminal domain"/>
    <property type="match status" value="1"/>
</dbReference>
<dbReference type="Gene3D" id="3.40.50.300">
    <property type="entry name" value="P-loop containing nucleotide triphosphate hydrolases"/>
    <property type="match status" value="1"/>
</dbReference>
<dbReference type="HAMAP" id="MF_01346">
    <property type="entry name" value="ATP_synth_alpha_bact"/>
    <property type="match status" value="1"/>
</dbReference>
<dbReference type="InterPro" id="IPR023366">
    <property type="entry name" value="ATP_synth_asu-like_sf"/>
</dbReference>
<dbReference type="InterPro" id="IPR000793">
    <property type="entry name" value="ATP_synth_asu_C"/>
</dbReference>
<dbReference type="InterPro" id="IPR038376">
    <property type="entry name" value="ATP_synth_asu_C_sf"/>
</dbReference>
<dbReference type="InterPro" id="IPR033732">
    <property type="entry name" value="ATP_synth_F1_a_nt-bd_dom"/>
</dbReference>
<dbReference type="InterPro" id="IPR005294">
    <property type="entry name" value="ATP_synth_F1_asu"/>
</dbReference>
<dbReference type="InterPro" id="IPR020003">
    <property type="entry name" value="ATPase_a/bsu_AS"/>
</dbReference>
<dbReference type="InterPro" id="IPR004100">
    <property type="entry name" value="ATPase_F1/V1/A1_a/bsu_N"/>
</dbReference>
<dbReference type="InterPro" id="IPR036121">
    <property type="entry name" value="ATPase_F1/V1/A1_a/bsu_N_sf"/>
</dbReference>
<dbReference type="InterPro" id="IPR000194">
    <property type="entry name" value="ATPase_F1/V1/A1_a/bsu_nucl-bd"/>
</dbReference>
<dbReference type="InterPro" id="IPR027417">
    <property type="entry name" value="P-loop_NTPase"/>
</dbReference>
<dbReference type="NCBIfam" id="TIGR00962">
    <property type="entry name" value="atpA"/>
    <property type="match status" value="1"/>
</dbReference>
<dbReference type="NCBIfam" id="NF009884">
    <property type="entry name" value="PRK13343.1"/>
    <property type="match status" value="1"/>
</dbReference>
<dbReference type="PANTHER" id="PTHR48082">
    <property type="entry name" value="ATP SYNTHASE SUBUNIT ALPHA, MITOCHONDRIAL"/>
    <property type="match status" value="1"/>
</dbReference>
<dbReference type="PANTHER" id="PTHR48082:SF2">
    <property type="entry name" value="ATP SYNTHASE SUBUNIT ALPHA, MITOCHONDRIAL"/>
    <property type="match status" value="1"/>
</dbReference>
<dbReference type="Pfam" id="PF00006">
    <property type="entry name" value="ATP-synt_ab"/>
    <property type="match status" value="1"/>
</dbReference>
<dbReference type="Pfam" id="PF00306">
    <property type="entry name" value="ATP-synt_ab_C"/>
    <property type="match status" value="1"/>
</dbReference>
<dbReference type="Pfam" id="PF02874">
    <property type="entry name" value="ATP-synt_ab_N"/>
    <property type="match status" value="1"/>
</dbReference>
<dbReference type="PIRSF" id="PIRSF039088">
    <property type="entry name" value="F_ATPase_subunit_alpha"/>
    <property type="match status" value="1"/>
</dbReference>
<dbReference type="SUPFAM" id="SSF47917">
    <property type="entry name" value="C-terminal domain of alpha and beta subunits of F1 ATP synthase"/>
    <property type="match status" value="1"/>
</dbReference>
<dbReference type="SUPFAM" id="SSF50615">
    <property type="entry name" value="N-terminal domain of alpha and beta subunits of F1 ATP synthase"/>
    <property type="match status" value="1"/>
</dbReference>
<dbReference type="SUPFAM" id="SSF52540">
    <property type="entry name" value="P-loop containing nucleoside triphosphate hydrolases"/>
    <property type="match status" value="1"/>
</dbReference>
<dbReference type="PROSITE" id="PS00152">
    <property type="entry name" value="ATPASE_ALPHA_BETA"/>
    <property type="match status" value="1"/>
</dbReference>
<proteinExistence type="inferred from homology"/>
<reference key="1">
    <citation type="journal article" date="2006" name="Genome Biol.">
        <title>The genome of Rhizobium leguminosarum has recognizable core and accessory components.</title>
        <authorList>
            <person name="Young J.P.W."/>
            <person name="Crossman L.C."/>
            <person name="Johnston A.W.B."/>
            <person name="Thomson N.R."/>
            <person name="Ghazoui Z.F."/>
            <person name="Hull K.H."/>
            <person name="Wexler M."/>
            <person name="Curson A.R.J."/>
            <person name="Todd J.D."/>
            <person name="Poole P.S."/>
            <person name="Mauchline T.H."/>
            <person name="East A.K."/>
            <person name="Quail M.A."/>
            <person name="Churcher C."/>
            <person name="Arrowsmith C."/>
            <person name="Cherevach I."/>
            <person name="Chillingworth T."/>
            <person name="Clarke K."/>
            <person name="Cronin A."/>
            <person name="Davis P."/>
            <person name="Fraser A."/>
            <person name="Hance Z."/>
            <person name="Hauser H."/>
            <person name="Jagels K."/>
            <person name="Moule S."/>
            <person name="Mungall K."/>
            <person name="Norbertczak H."/>
            <person name="Rabbinowitsch E."/>
            <person name="Sanders M."/>
            <person name="Simmonds M."/>
            <person name="Whitehead S."/>
            <person name="Parkhill J."/>
        </authorList>
    </citation>
    <scope>NUCLEOTIDE SEQUENCE [LARGE SCALE GENOMIC DNA]</scope>
    <source>
        <strain>DSM 114642 / LMG 32736 / 3841</strain>
    </source>
</reference>
<accession>Q1MAZ0</accession>
<gene>
    <name evidence="1" type="primary">atpA</name>
    <name type="ordered locus">RL4409</name>
</gene>
<feature type="chain" id="PRO_0000256103" description="ATP synthase subunit alpha">
    <location>
        <begin position="1"/>
        <end position="509"/>
    </location>
</feature>
<feature type="binding site" evidence="1">
    <location>
        <begin position="169"/>
        <end position="176"/>
    </location>
    <ligand>
        <name>ATP</name>
        <dbReference type="ChEBI" id="CHEBI:30616"/>
    </ligand>
</feature>
<feature type="site" description="Required for activity" evidence="1">
    <location>
        <position position="370"/>
    </location>
</feature>
<name>ATPA_RHIJ3</name>
<keyword id="KW-0066">ATP synthesis</keyword>
<keyword id="KW-0067">ATP-binding</keyword>
<keyword id="KW-0997">Cell inner membrane</keyword>
<keyword id="KW-1003">Cell membrane</keyword>
<keyword id="KW-0139">CF(1)</keyword>
<keyword id="KW-0375">Hydrogen ion transport</keyword>
<keyword id="KW-0406">Ion transport</keyword>
<keyword id="KW-0472">Membrane</keyword>
<keyword id="KW-0547">Nucleotide-binding</keyword>
<keyword id="KW-1278">Translocase</keyword>
<keyword id="KW-0813">Transport</keyword>
<organism>
    <name type="scientific">Rhizobium johnstonii (strain DSM 114642 / LMG 32736 / 3841)</name>
    <name type="common">Rhizobium leguminosarum bv. viciae</name>
    <dbReference type="NCBI Taxonomy" id="216596"/>
    <lineage>
        <taxon>Bacteria</taxon>
        <taxon>Pseudomonadati</taxon>
        <taxon>Pseudomonadota</taxon>
        <taxon>Alphaproteobacteria</taxon>
        <taxon>Hyphomicrobiales</taxon>
        <taxon>Rhizobiaceae</taxon>
        <taxon>Rhizobium/Agrobacterium group</taxon>
        <taxon>Rhizobium</taxon>
        <taxon>Rhizobium johnstonii</taxon>
    </lineage>
</organism>
<sequence>MDIRAAEISAILKDQIKNFGKEAEVSEVGQVLSVGDGIARVYGLDNVQAGEMVEFPGGIRGMALNLESDNVGVVIFGSDRDIKEGDTVKRTGAIVDVPVGPELLGRVVDALGNPIDGKGPINATRRSRVDIKAPGIIPRKSVHEPMSTGLKAIDALIPVGRGQRELVIGDRQTGKTAILLDAFLNQKAIHDNGPEGEKLYCVYVAIGQKRSTVAQFVKVLEERGALKYSIIVAATASDPAPMQYLAPFAGCAMGEYFRDNGMHALIGYDDLSKQAVSYRQMSLLLRRPPGREAYPGDVFYLHSRLLERAAKMNDDMGAGSLTALPVIETQGNDVSAFIPTNVISITDGQIFLETDLFYQGIRPAVNVGLSVSRVGSAAQIKAMKQVAGSIKGELAQYREMAAFAQFGSDLDAATQRLLNRGARLTELLKQPQFSPLKTEEQVAVIFAGVNGYLDKLPVASVGKFEQGFLSYLRSEGSAILDAIRTEKAISDDTRGKLTAALDSFAKSFS</sequence>